<accession>B0VKC6</accession>
<reference key="1">
    <citation type="journal article" date="2008" name="PLoS ONE">
        <title>Comparative analysis of Acinetobacters: three genomes for three lifestyles.</title>
        <authorList>
            <person name="Vallenet D."/>
            <person name="Nordmann P."/>
            <person name="Barbe V."/>
            <person name="Poirel L."/>
            <person name="Mangenot S."/>
            <person name="Bataille E."/>
            <person name="Dossat C."/>
            <person name="Gas S."/>
            <person name="Kreimeyer A."/>
            <person name="Lenoble P."/>
            <person name="Oztas S."/>
            <person name="Poulain J."/>
            <person name="Segurens B."/>
            <person name="Robert C."/>
            <person name="Abergel C."/>
            <person name="Claverie J.-M."/>
            <person name="Raoult D."/>
            <person name="Medigue C."/>
            <person name="Weissenbach J."/>
            <person name="Cruveiller S."/>
        </authorList>
    </citation>
    <scope>NUCLEOTIDE SEQUENCE [LARGE SCALE GENOMIC DNA]</scope>
    <source>
        <strain>SDF</strain>
    </source>
</reference>
<name>RS21_ACIBS</name>
<keyword id="KW-0687">Ribonucleoprotein</keyword>
<keyword id="KW-0689">Ribosomal protein</keyword>
<comment type="similarity">
    <text evidence="1">Belongs to the bacterial ribosomal protein bS21 family.</text>
</comment>
<evidence type="ECO:0000255" key="1">
    <source>
        <dbReference type="HAMAP-Rule" id="MF_00358"/>
    </source>
</evidence>
<evidence type="ECO:0000305" key="2"/>
<proteinExistence type="inferred from homology"/>
<dbReference type="EMBL" id="CU468230">
    <property type="protein sequence ID" value="CAP00629.1"/>
    <property type="molecule type" value="Genomic_DNA"/>
</dbReference>
<dbReference type="SMR" id="B0VKC6"/>
<dbReference type="KEGG" id="abm:ABSDF1283"/>
<dbReference type="HOGENOM" id="CLU_159258_1_0_6"/>
<dbReference type="Proteomes" id="UP000001741">
    <property type="component" value="Chromosome"/>
</dbReference>
<dbReference type="GO" id="GO:1990904">
    <property type="term" value="C:ribonucleoprotein complex"/>
    <property type="evidence" value="ECO:0007669"/>
    <property type="project" value="UniProtKB-KW"/>
</dbReference>
<dbReference type="GO" id="GO:0005840">
    <property type="term" value="C:ribosome"/>
    <property type="evidence" value="ECO:0007669"/>
    <property type="project" value="UniProtKB-KW"/>
</dbReference>
<dbReference type="GO" id="GO:0003735">
    <property type="term" value="F:structural constituent of ribosome"/>
    <property type="evidence" value="ECO:0007669"/>
    <property type="project" value="InterPro"/>
</dbReference>
<dbReference type="GO" id="GO:0006412">
    <property type="term" value="P:translation"/>
    <property type="evidence" value="ECO:0007669"/>
    <property type="project" value="UniProtKB-UniRule"/>
</dbReference>
<dbReference type="Gene3D" id="1.20.5.1150">
    <property type="entry name" value="Ribosomal protein S8"/>
    <property type="match status" value="1"/>
</dbReference>
<dbReference type="HAMAP" id="MF_00358">
    <property type="entry name" value="Ribosomal_bS21"/>
    <property type="match status" value="1"/>
</dbReference>
<dbReference type="InterPro" id="IPR001911">
    <property type="entry name" value="Ribosomal_bS21"/>
</dbReference>
<dbReference type="InterPro" id="IPR018278">
    <property type="entry name" value="Ribosomal_bS21_CS"/>
</dbReference>
<dbReference type="InterPro" id="IPR038380">
    <property type="entry name" value="Ribosomal_bS21_sf"/>
</dbReference>
<dbReference type="NCBIfam" id="TIGR00030">
    <property type="entry name" value="S21p"/>
    <property type="match status" value="1"/>
</dbReference>
<dbReference type="PANTHER" id="PTHR21109">
    <property type="entry name" value="MITOCHONDRIAL 28S RIBOSOMAL PROTEIN S21"/>
    <property type="match status" value="1"/>
</dbReference>
<dbReference type="PANTHER" id="PTHR21109:SF22">
    <property type="entry name" value="SMALL RIBOSOMAL SUBUNIT PROTEIN BS21"/>
    <property type="match status" value="1"/>
</dbReference>
<dbReference type="Pfam" id="PF01165">
    <property type="entry name" value="Ribosomal_S21"/>
    <property type="match status" value="1"/>
</dbReference>
<dbReference type="PRINTS" id="PR00976">
    <property type="entry name" value="RIBOSOMALS21"/>
</dbReference>
<dbReference type="PROSITE" id="PS01181">
    <property type="entry name" value="RIBOSOMAL_S21"/>
    <property type="match status" value="1"/>
</dbReference>
<feature type="chain" id="PRO_1000120572" description="Small ribosomal subunit protein bS21">
    <location>
        <begin position="1"/>
        <end position="71"/>
    </location>
</feature>
<protein>
    <recommendedName>
        <fullName evidence="1">Small ribosomal subunit protein bS21</fullName>
    </recommendedName>
    <alternativeName>
        <fullName evidence="2">30S ribosomal protein S21</fullName>
    </alternativeName>
</protein>
<sequence>MPQVKLKEGEPVDVAIRRFKRSCEKAGVLADVRKREFYEKPTQERKRKKAAAVKRYQKKLARESVRTTRLY</sequence>
<organism>
    <name type="scientific">Acinetobacter baumannii (strain SDF)</name>
    <dbReference type="NCBI Taxonomy" id="509170"/>
    <lineage>
        <taxon>Bacteria</taxon>
        <taxon>Pseudomonadati</taxon>
        <taxon>Pseudomonadota</taxon>
        <taxon>Gammaproteobacteria</taxon>
        <taxon>Moraxellales</taxon>
        <taxon>Moraxellaceae</taxon>
        <taxon>Acinetobacter</taxon>
        <taxon>Acinetobacter calcoaceticus/baumannii complex</taxon>
    </lineage>
</organism>
<gene>
    <name evidence="1" type="primary">rpsU</name>
    <name type="ordered locus">ABSDF1283</name>
</gene>